<accession>P0CU98</accession>
<organism>
    <name type="scientific">Plasmopara viticola</name>
    <name type="common">Downy mildew of grapevine</name>
    <name type="synonym">Botrytis viticola</name>
    <dbReference type="NCBI Taxonomy" id="143451"/>
    <lineage>
        <taxon>Eukaryota</taxon>
        <taxon>Sar</taxon>
        <taxon>Stramenopiles</taxon>
        <taxon>Oomycota</taxon>
        <taxon>Peronosporales</taxon>
        <taxon>Peronosporaceae</taxon>
        <taxon>Plasmopara</taxon>
    </lineage>
</organism>
<proteinExistence type="evidence at transcript level"/>
<evidence type="ECO:0000255" key="1"/>
<evidence type="ECO:0000269" key="2">
    <source>
    </source>
</evidence>
<evidence type="ECO:0000303" key="3">
    <source>
    </source>
</evidence>
<evidence type="ECO:0000305" key="4"/>
<evidence type="ECO:0000305" key="5">
    <source>
    </source>
</evidence>
<comment type="function">
    <text evidence="2">Effector that completely suppresses the host cell death induced by cell death-inducing proteins.</text>
</comment>
<comment type="subcellular location">
    <subcellularLocation>
        <location evidence="2">Secreted</location>
    </subcellularLocation>
    <subcellularLocation>
        <location evidence="2">Host nucleus</location>
    </subcellularLocation>
    <subcellularLocation>
        <location evidence="2">Host cytoplasm</location>
    </subcellularLocation>
</comment>
<comment type="domain">
    <text evidence="5">Has the canonical translocation RxLR motif, but lacks the canonical EER motif, which characterizes most oomycete effectors identified so far.</text>
</comment>
<comment type="similarity">
    <text evidence="4">Belongs to the RxLR effector family.</text>
</comment>
<gene>
    <name evidence="3" type="primary">RXLR15</name>
</gene>
<dbReference type="SMR" id="P0CU98"/>
<dbReference type="GO" id="GO:0005576">
    <property type="term" value="C:extracellular region"/>
    <property type="evidence" value="ECO:0007669"/>
    <property type="project" value="UniProtKB-SubCell"/>
</dbReference>
<dbReference type="GO" id="GO:0030430">
    <property type="term" value="C:host cell cytoplasm"/>
    <property type="evidence" value="ECO:0007669"/>
    <property type="project" value="UniProtKB-SubCell"/>
</dbReference>
<dbReference type="GO" id="GO:0042025">
    <property type="term" value="C:host cell nucleus"/>
    <property type="evidence" value="ECO:0007669"/>
    <property type="project" value="UniProtKB-SubCell"/>
</dbReference>
<dbReference type="InterPro" id="IPR031825">
    <property type="entry name" value="RXLR"/>
</dbReference>
<dbReference type="Pfam" id="PF16810">
    <property type="entry name" value="RXLR"/>
    <property type="match status" value="1"/>
</dbReference>
<protein>
    <recommendedName>
        <fullName evidence="3">Secreted RxLR effector protein 15</fullName>
    </recommendedName>
</protein>
<feature type="signal peptide" evidence="1">
    <location>
        <begin position="1"/>
        <end position="22"/>
    </location>
</feature>
<feature type="chain" id="PRO_0000447907" description="Secreted RxLR effector protein 15">
    <location>
        <begin position="23"/>
        <end position="136"/>
    </location>
</feature>
<feature type="short sequence motif" description="RxLR" evidence="5">
    <location>
        <begin position="47"/>
        <end position="50"/>
    </location>
</feature>
<name>RLR15_PLAVT</name>
<sequence length="136" mass="15476">MRGHSALMMAVVTLAAVSSGAAEVANTAAVSSDYLIGTILTFAESDRLLRVNDVDDVPVYHYPPEKGKRTTFFEDRMKKKLANPEKIRRLYWKWYSMGYSAREVVQHLDQTDNRELKEIYHNLGVGYAEFVAKMNV</sequence>
<keyword id="KW-1035">Host cytoplasm</keyword>
<keyword id="KW-1048">Host nucleus</keyword>
<keyword id="KW-0964">Secreted</keyword>
<keyword id="KW-0732">Signal</keyword>
<keyword id="KW-0843">Virulence</keyword>
<reference key="1">
    <citation type="journal article" date="2018" name="Front. Plant Sci.">
        <title>In planta functional analysis and subcellular localization of the oomycete pathogen Plasmopara viticola candidate RXLR effector repertoire.</title>
        <authorList>
            <person name="Liu Y."/>
            <person name="Lan X."/>
            <person name="Song S."/>
            <person name="Yin L."/>
            <person name="Dry I.B."/>
            <person name="Qu J."/>
            <person name="Xiang J."/>
            <person name="Lu J."/>
        </authorList>
    </citation>
    <scope>NUCLEOTIDE SEQUENCE [MRNA]</scope>
    <scope>DOMAIN</scope>
    <scope>FUNCTION</scope>
    <scope>SUBCELLULAR LOCATION</scope>
</reference>